<sequence length="71" mass="7255">MANLKAVFLICILAFIAFHCVVGAPTAEDSIVVKRSIGTAVKKAVPIAKKVGKVAIPIAKAVLSVVGQLVG</sequence>
<proteinExistence type="evidence at protein level"/>
<accession>O17513</accession>
<protein>
    <recommendedName>
        <fullName>Ceratotoxin-D</fullName>
    </recommendedName>
</protein>
<gene>
    <name type="primary">CTXD</name>
</gene>
<comment type="function">
    <text>Female-specific peptides with potent activity against Gram-positive and Gram-negative bacteria. They have as well hemolytic activity.</text>
</comment>
<comment type="biophysicochemical properties">
    <temperatureDependence>
        <text>Thermostable. Still active at 100 degrees Celsius.</text>
    </temperatureDependence>
</comment>
<comment type="subunit">
    <text evidence="1">Homomer of four to six subunits.</text>
</comment>
<comment type="subcellular location">
    <subcellularLocation>
        <location evidence="1">Secreted</location>
    </subcellularLocation>
</comment>
<name>CTXD_CERCA</name>
<keyword id="KW-0044">Antibiotic</keyword>
<keyword id="KW-0929">Antimicrobial</keyword>
<keyword id="KW-0165">Cleavage on pair of basic residues</keyword>
<keyword id="KW-0204">Cytolysis</keyword>
<keyword id="KW-0354">Hemolysis</keyword>
<keyword id="KW-0391">Immunity</keyword>
<keyword id="KW-0399">Innate immunity</keyword>
<keyword id="KW-0964">Secreted</keyword>
<keyword id="KW-0732">Signal</keyword>
<organism>
    <name type="scientific">Ceratitis capitata</name>
    <name type="common">Mediterranean fruit fly</name>
    <name type="synonym">Tephritis capitata</name>
    <dbReference type="NCBI Taxonomy" id="7213"/>
    <lineage>
        <taxon>Eukaryota</taxon>
        <taxon>Metazoa</taxon>
        <taxon>Ecdysozoa</taxon>
        <taxon>Arthropoda</taxon>
        <taxon>Hexapoda</taxon>
        <taxon>Insecta</taxon>
        <taxon>Pterygota</taxon>
        <taxon>Neoptera</taxon>
        <taxon>Endopterygota</taxon>
        <taxon>Diptera</taxon>
        <taxon>Brachycera</taxon>
        <taxon>Muscomorpha</taxon>
        <taxon>Tephritoidea</taxon>
        <taxon>Tephritidae</taxon>
        <taxon>Ceratitis</taxon>
        <taxon>Ceratitis</taxon>
    </lineage>
</organism>
<evidence type="ECO:0000250" key="1"/>
<evidence type="ECO:0000255" key="2"/>
<reference key="1">
    <citation type="journal article" date="1997" name="Insect Biochem. Mol. Biol.">
        <title>The genes encoding the antibacterial sex-specific peptides ceratotoxins are clustered in the genome of the medfly Ceratitis capitata.</title>
        <authorList>
            <person name="Rosetto M."/>
            <person name="de Filippis T."/>
            <person name="Manetti A.G.O."/>
            <person name="Marchini D."/>
            <person name="Baldari C.T."/>
            <person name="Dallai R."/>
        </authorList>
    </citation>
    <scope>NUCLEOTIDE SEQUENCE [GENOMIC DNA]</scope>
    <source>
        <tissue>Female accessory gland</tissue>
    </source>
</reference>
<dbReference type="EMBL" id="Y15375">
    <property type="protein sequence ID" value="CAA75598.1"/>
    <property type="molecule type" value="Genomic_DNA"/>
</dbReference>
<dbReference type="SMR" id="O17513"/>
<dbReference type="EnsemblMetazoa" id="XM_004523428.2">
    <property type="protein sequence ID" value="XP_004523485.1"/>
    <property type="gene ID" value="LOC101454911"/>
</dbReference>
<dbReference type="GeneID" id="101454911"/>
<dbReference type="KEGG" id="ccat:101454911"/>
<dbReference type="GO" id="GO:0005576">
    <property type="term" value="C:extracellular region"/>
    <property type="evidence" value="ECO:0007669"/>
    <property type="project" value="UniProtKB-SubCell"/>
</dbReference>
<dbReference type="GO" id="GO:0042742">
    <property type="term" value="P:defense response to bacterium"/>
    <property type="evidence" value="ECO:0007669"/>
    <property type="project" value="UniProtKB-KW"/>
</dbReference>
<dbReference type="GO" id="GO:0045087">
    <property type="term" value="P:innate immune response"/>
    <property type="evidence" value="ECO:0007669"/>
    <property type="project" value="UniProtKB-KW"/>
</dbReference>
<dbReference type="GO" id="GO:0031640">
    <property type="term" value="P:killing of cells of another organism"/>
    <property type="evidence" value="ECO:0007669"/>
    <property type="project" value="UniProtKB-KW"/>
</dbReference>
<feature type="signal peptide" evidence="2">
    <location>
        <begin position="1"/>
        <end position="23"/>
    </location>
</feature>
<feature type="propeptide" id="PRO_0000004972" evidence="1">
    <location>
        <begin position="24"/>
        <end position="35"/>
    </location>
</feature>
<feature type="peptide" id="PRO_0000004973" description="Ceratotoxin-D">
    <location>
        <begin position="36"/>
        <end position="71"/>
    </location>
</feature>